<comment type="function">
    <text evidence="1">Activates KDO (a required 8-carbon sugar) for incorporation into bacterial lipopolysaccharide in Gram-negative bacteria.</text>
</comment>
<comment type="catalytic activity">
    <reaction evidence="1">
        <text>3-deoxy-alpha-D-manno-oct-2-ulosonate + CTP = CMP-3-deoxy-beta-D-manno-octulosonate + diphosphate</text>
        <dbReference type="Rhea" id="RHEA:23448"/>
        <dbReference type="ChEBI" id="CHEBI:33019"/>
        <dbReference type="ChEBI" id="CHEBI:37563"/>
        <dbReference type="ChEBI" id="CHEBI:85986"/>
        <dbReference type="ChEBI" id="CHEBI:85987"/>
        <dbReference type="EC" id="2.7.7.38"/>
    </reaction>
</comment>
<comment type="pathway">
    <text evidence="1">Nucleotide-sugar biosynthesis; CMP-3-deoxy-D-manno-octulosonate biosynthesis; CMP-3-deoxy-D-manno-octulosonate from 3-deoxy-D-manno-octulosonate and CTP: step 1/1.</text>
</comment>
<comment type="pathway">
    <text evidence="1">Bacterial outer membrane biogenesis; lipopolysaccharide biosynthesis.</text>
</comment>
<comment type="subcellular location">
    <subcellularLocation>
        <location evidence="1">Cytoplasm</location>
    </subcellularLocation>
</comment>
<comment type="similarity">
    <text evidence="1">Belongs to the KdsB family.</text>
</comment>
<reference key="1">
    <citation type="journal article" date="2009" name="Environ. Microbiol.">
        <title>Contribution of mobile genetic elements to Desulfovibrio vulgaris genome plasticity.</title>
        <authorList>
            <person name="Walker C.B."/>
            <person name="Stolyar S."/>
            <person name="Chivian D."/>
            <person name="Pinel N."/>
            <person name="Gabster J.A."/>
            <person name="Dehal P.S."/>
            <person name="He Z."/>
            <person name="Yang Z.K."/>
            <person name="Yen H.C."/>
            <person name="Zhou J."/>
            <person name="Wall J.D."/>
            <person name="Hazen T.C."/>
            <person name="Arkin A.P."/>
            <person name="Stahl D.A."/>
        </authorList>
    </citation>
    <scope>NUCLEOTIDE SEQUENCE [LARGE SCALE GENOMIC DNA]</scope>
    <source>
        <strain>DP4</strain>
    </source>
</reference>
<sequence>MSAPRTCYGIIPARYASSRFPGKPLADILGRPMFWHVYDRARRCAAFDEVALATDDARIADAANVLGVPCVMTAEHHPSGTDRVHEAAMRLGVADDAVVVNIQGDEPALDPRMLDQLVAPFADASVRVATLAMALSAQEAQSPDRVKVVVAANGDALYFSRADIPFVRDGDVGGDTAGRLGHIGLYAFRMEALRRFTQLPPSRLEQTEKLEQLRLLENGIAIRVVPTTYRTHGVDRPEDIDVIINLLRENDG</sequence>
<dbReference type="EC" id="2.7.7.38" evidence="1"/>
<dbReference type="EMBL" id="CP000527">
    <property type="protein sequence ID" value="ABM27291.1"/>
    <property type="molecule type" value="Genomic_DNA"/>
</dbReference>
<dbReference type="RefSeq" id="WP_011791505.1">
    <property type="nucleotide sequence ID" value="NC_008751.1"/>
</dbReference>
<dbReference type="SMR" id="A1VA25"/>
<dbReference type="KEGG" id="dvl:Dvul_0267"/>
<dbReference type="HOGENOM" id="CLU_065038_0_1_7"/>
<dbReference type="UniPathway" id="UPA00030"/>
<dbReference type="UniPathway" id="UPA00358">
    <property type="reaction ID" value="UER00476"/>
</dbReference>
<dbReference type="Proteomes" id="UP000009173">
    <property type="component" value="Chromosome"/>
</dbReference>
<dbReference type="GO" id="GO:0005829">
    <property type="term" value="C:cytosol"/>
    <property type="evidence" value="ECO:0007669"/>
    <property type="project" value="TreeGrafter"/>
</dbReference>
<dbReference type="GO" id="GO:0008690">
    <property type="term" value="F:3-deoxy-manno-octulosonate cytidylyltransferase activity"/>
    <property type="evidence" value="ECO:0007669"/>
    <property type="project" value="UniProtKB-UniRule"/>
</dbReference>
<dbReference type="GO" id="GO:0033468">
    <property type="term" value="P:CMP-keto-3-deoxy-D-manno-octulosonic acid biosynthetic process"/>
    <property type="evidence" value="ECO:0007669"/>
    <property type="project" value="UniProtKB-UniRule"/>
</dbReference>
<dbReference type="GO" id="GO:0009103">
    <property type="term" value="P:lipopolysaccharide biosynthetic process"/>
    <property type="evidence" value="ECO:0007669"/>
    <property type="project" value="UniProtKB-UniRule"/>
</dbReference>
<dbReference type="CDD" id="cd02517">
    <property type="entry name" value="CMP-KDO-Synthetase"/>
    <property type="match status" value="1"/>
</dbReference>
<dbReference type="FunFam" id="3.90.550.10:FF:000011">
    <property type="entry name" value="3-deoxy-manno-octulosonate cytidylyltransferase"/>
    <property type="match status" value="1"/>
</dbReference>
<dbReference type="Gene3D" id="3.90.550.10">
    <property type="entry name" value="Spore Coat Polysaccharide Biosynthesis Protein SpsA, Chain A"/>
    <property type="match status" value="1"/>
</dbReference>
<dbReference type="HAMAP" id="MF_00057">
    <property type="entry name" value="KdsB"/>
    <property type="match status" value="1"/>
</dbReference>
<dbReference type="InterPro" id="IPR003329">
    <property type="entry name" value="Cytidylyl_trans"/>
</dbReference>
<dbReference type="InterPro" id="IPR004528">
    <property type="entry name" value="KdsB"/>
</dbReference>
<dbReference type="InterPro" id="IPR029044">
    <property type="entry name" value="Nucleotide-diphossugar_trans"/>
</dbReference>
<dbReference type="NCBIfam" id="TIGR00466">
    <property type="entry name" value="kdsB"/>
    <property type="match status" value="1"/>
</dbReference>
<dbReference type="NCBIfam" id="NF003950">
    <property type="entry name" value="PRK05450.1-3"/>
    <property type="match status" value="1"/>
</dbReference>
<dbReference type="NCBIfam" id="NF003952">
    <property type="entry name" value="PRK05450.1-5"/>
    <property type="match status" value="1"/>
</dbReference>
<dbReference type="NCBIfam" id="NF009905">
    <property type="entry name" value="PRK13368.1"/>
    <property type="match status" value="1"/>
</dbReference>
<dbReference type="PANTHER" id="PTHR42866">
    <property type="entry name" value="3-DEOXY-MANNO-OCTULOSONATE CYTIDYLYLTRANSFERASE"/>
    <property type="match status" value="1"/>
</dbReference>
<dbReference type="PANTHER" id="PTHR42866:SF2">
    <property type="entry name" value="3-DEOXY-MANNO-OCTULOSONATE CYTIDYLYLTRANSFERASE, MITOCHONDRIAL"/>
    <property type="match status" value="1"/>
</dbReference>
<dbReference type="Pfam" id="PF02348">
    <property type="entry name" value="CTP_transf_3"/>
    <property type="match status" value="1"/>
</dbReference>
<dbReference type="SUPFAM" id="SSF53448">
    <property type="entry name" value="Nucleotide-diphospho-sugar transferases"/>
    <property type="match status" value="1"/>
</dbReference>
<keyword id="KW-0963">Cytoplasm</keyword>
<keyword id="KW-0448">Lipopolysaccharide biosynthesis</keyword>
<keyword id="KW-0548">Nucleotidyltransferase</keyword>
<keyword id="KW-0808">Transferase</keyword>
<protein>
    <recommendedName>
        <fullName evidence="1">3-deoxy-manno-octulosonate cytidylyltransferase</fullName>
        <ecNumber evidence="1">2.7.7.38</ecNumber>
    </recommendedName>
    <alternativeName>
        <fullName evidence="1">CMP-2-keto-3-deoxyoctulosonic acid synthase</fullName>
        <shortName evidence="1">CKS</shortName>
        <shortName evidence="1">CMP-KDO synthase</shortName>
    </alternativeName>
</protein>
<organism>
    <name type="scientific">Nitratidesulfovibrio vulgaris (strain DP4)</name>
    <name type="common">Desulfovibrio vulgaris</name>
    <dbReference type="NCBI Taxonomy" id="391774"/>
    <lineage>
        <taxon>Bacteria</taxon>
        <taxon>Pseudomonadati</taxon>
        <taxon>Thermodesulfobacteriota</taxon>
        <taxon>Desulfovibrionia</taxon>
        <taxon>Desulfovibrionales</taxon>
        <taxon>Desulfovibrionaceae</taxon>
        <taxon>Nitratidesulfovibrio</taxon>
    </lineage>
</organism>
<accession>A1VA25</accession>
<gene>
    <name evidence="1" type="primary">kdsB</name>
    <name type="ordered locus">Dvul_0267</name>
</gene>
<feature type="chain" id="PRO_0000370063" description="3-deoxy-manno-octulosonate cytidylyltransferase">
    <location>
        <begin position="1"/>
        <end position="252"/>
    </location>
</feature>
<name>KDSB_NITV4</name>
<evidence type="ECO:0000255" key="1">
    <source>
        <dbReference type="HAMAP-Rule" id="MF_00057"/>
    </source>
</evidence>
<proteinExistence type="inferred from homology"/>